<protein>
    <recommendedName>
        <fullName>NADH-ubiquinone oxidoreductase chain 4L</fullName>
        <ecNumber>7.1.1.2</ecNumber>
    </recommendedName>
    <alternativeName>
        <fullName>NADH dehydrogenase subunit 4L</fullName>
    </alternativeName>
</protein>
<sequence length="97" mass="11188">MSMFGLFTCLSIYFSGVYVFCSKRKHLLVVLLSLEYIVLSLFMLIVLFLVEFDYDYFFPVIFLVFSVCEGALGLSILVSMIRSHGNDFFNSFFLSLC</sequence>
<proteinExistence type="inferred from homology"/>
<organism>
    <name type="scientific">Locusta migratoria</name>
    <name type="common">Migratory locust</name>
    <dbReference type="NCBI Taxonomy" id="7004"/>
    <lineage>
        <taxon>Eukaryota</taxon>
        <taxon>Metazoa</taxon>
        <taxon>Ecdysozoa</taxon>
        <taxon>Arthropoda</taxon>
        <taxon>Hexapoda</taxon>
        <taxon>Insecta</taxon>
        <taxon>Pterygota</taxon>
        <taxon>Neoptera</taxon>
        <taxon>Polyneoptera</taxon>
        <taxon>Orthoptera</taxon>
        <taxon>Caelifera</taxon>
        <taxon>Acrididea</taxon>
        <taxon>Acridomorpha</taxon>
        <taxon>Acridoidea</taxon>
        <taxon>Acrididae</taxon>
        <taxon>Oedipodinae</taxon>
        <taxon>Locusta</taxon>
    </lineage>
</organism>
<evidence type="ECO:0000250" key="1"/>
<evidence type="ECO:0000255" key="2"/>
<evidence type="ECO:0000305" key="3"/>
<keyword id="KW-0249">Electron transport</keyword>
<keyword id="KW-0472">Membrane</keyword>
<keyword id="KW-0496">Mitochondrion</keyword>
<keyword id="KW-0520">NAD</keyword>
<keyword id="KW-0679">Respiratory chain</keyword>
<keyword id="KW-1278">Translocase</keyword>
<keyword id="KW-0812">Transmembrane</keyword>
<keyword id="KW-1133">Transmembrane helix</keyword>
<keyword id="KW-0813">Transport</keyword>
<keyword id="KW-0830">Ubiquinone</keyword>
<gene>
    <name type="primary">ND4L</name>
</gene>
<feature type="chain" id="PRO_0000118436" description="NADH-ubiquinone oxidoreductase chain 4L">
    <location>
        <begin position="1"/>
        <end position="97"/>
    </location>
</feature>
<feature type="transmembrane region" description="Helical" evidence="2">
    <location>
        <begin position="1"/>
        <end position="21"/>
    </location>
</feature>
<feature type="transmembrane region" description="Helical" evidence="2">
    <location>
        <begin position="28"/>
        <end position="48"/>
    </location>
</feature>
<feature type="transmembrane region" description="Helical" evidence="2">
    <location>
        <begin position="57"/>
        <end position="77"/>
    </location>
</feature>
<comment type="function">
    <text evidence="1">Core subunit of the mitochondrial membrane respiratory chain NADH dehydrogenase (Complex I) that is believed to belong to the minimal assembly required for catalysis. Complex I functions in the transfer of electrons from NADH to the respiratory chain. The immediate electron acceptor for the enzyme is believed to be ubiquinone (By similarity).</text>
</comment>
<comment type="catalytic activity">
    <reaction>
        <text>a ubiquinone + NADH + 5 H(+)(in) = a ubiquinol + NAD(+) + 4 H(+)(out)</text>
        <dbReference type="Rhea" id="RHEA:29091"/>
        <dbReference type="Rhea" id="RHEA-COMP:9565"/>
        <dbReference type="Rhea" id="RHEA-COMP:9566"/>
        <dbReference type="ChEBI" id="CHEBI:15378"/>
        <dbReference type="ChEBI" id="CHEBI:16389"/>
        <dbReference type="ChEBI" id="CHEBI:17976"/>
        <dbReference type="ChEBI" id="CHEBI:57540"/>
        <dbReference type="ChEBI" id="CHEBI:57945"/>
        <dbReference type="EC" id="7.1.1.2"/>
    </reaction>
</comment>
<comment type="subcellular location">
    <subcellularLocation>
        <location evidence="1">Mitochondrion membrane</location>
        <topology evidence="1">Multi-pass membrane protein</topology>
    </subcellularLocation>
</comment>
<comment type="similarity">
    <text evidence="3">Belongs to the complex I subunit 4L family.</text>
</comment>
<accession>Q36423</accession>
<dbReference type="EC" id="7.1.1.2"/>
<dbReference type="EMBL" id="X80245">
    <property type="protein sequence ID" value="CAA56532.1"/>
    <property type="molecule type" value="Genomic_DNA"/>
</dbReference>
<dbReference type="PIR" id="S40616">
    <property type="entry name" value="S40616"/>
</dbReference>
<dbReference type="RefSeq" id="NP_007299.1">
    <property type="nucleotide sequence ID" value="NC_001712.1"/>
</dbReference>
<dbReference type="SMR" id="Q36423"/>
<dbReference type="GeneID" id="807968"/>
<dbReference type="CTD" id="4539"/>
<dbReference type="GO" id="GO:0031966">
    <property type="term" value="C:mitochondrial membrane"/>
    <property type="evidence" value="ECO:0007669"/>
    <property type="project" value="UniProtKB-SubCell"/>
</dbReference>
<dbReference type="GO" id="GO:0030964">
    <property type="term" value="C:NADH dehydrogenase complex"/>
    <property type="evidence" value="ECO:0007669"/>
    <property type="project" value="TreeGrafter"/>
</dbReference>
<dbReference type="GO" id="GO:0008137">
    <property type="term" value="F:NADH dehydrogenase (ubiquinone) activity"/>
    <property type="evidence" value="ECO:0007669"/>
    <property type="project" value="UniProtKB-EC"/>
</dbReference>
<dbReference type="GO" id="GO:0042773">
    <property type="term" value="P:ATP synthesis coupled electron transport"/>
    <property type="evidence" value="ECO:0007669"/>
    <property type="project" value="InterPro"/>
</dbReference>
<dbReference type="Gene3D" id="1.10.287.3510">
    <property type="match status" value="1"/>
</dbReference>
<dbReference type="InterPro" id="IPR001133">
    <property type="entry name" value="NADH_UbQ_OxRdtase_chain4L/K"/>
</dbReference>
<dbReference type="InterPro" id="IPR039428">
    <property type="entry name" value="NUOK/Mnh_C1-like"/>
</dbReference>
<dbReference type="PANTHER" id="PTHR11434:SF0">
    <property type="entry name" value="NADH-UBIQUINONE OXIDOREDUCTASE CHAIN 4L"/>
    <property type="match status" value="1"/>
</dbReference>
<dbReference type="PANTHER" id="PTHR11434">
    <property type="entry name" value="NADH-UBIQUINONE OXIDOREDUCTASE SUBUNIT ND4L"/>
    <property type="match status" value="1"/>
</dbReference>
<dbReference type="Pfam" id="PF00420">
    <property type="entry name" value="Oxidored_q2"/>
    <property type="match status" value="1"/>
</dbReference>
<reference key="1">
    <citation type="journal article" date="1994" name="Curr. Genet.">
        <title>The genes for cytochrome b, ND 4L, ND6 and two tRNAs from the mitochondrial genome of the locust, Locusta migratoria.</title>
        <authorList>
            <person name="Rippe R.M."/>
            <person name="Gellissen G."/>
        </authorList>
    </citation>
    <scope>NUCLEOTIDE SEQUENCE [GENOMIC DNA]</scope>
</reference>
<reference key="2">
    <citation type="journal article" date="1995" name="J. Mol. Evol.">
        <title>The sequence, organization, and evolution of the Locusta migratoria mitochondrial genome.</title>
        <authorList>
            <person name="Flook P.K."/>
            <person name="Rowell C.H.F."/>
            <person name="Gellissen G."/>
        </authorList>
    </citation>
    <scope>NUCLEOTIDE SEQUENCE [GENOMIC DNA]</scope>
</reference>
<geneLocation type="mitochondrion"/>
<name>NU4LM_LOCMI</name>